<reference key="1">
    <citation type="journal article" date="2007" name="Theor. Appl. Genet.">
        <title>Complete chloroplast genome sequences of Hordeum vulgare, Sorghum bicolor and Agrostis stolonifera, and comparative analyses with other grass genomes.</title>
        <authorList>
            <person name="Saski C."/>
            <person name="Lee S.-B."/>
            <person name="Fjellheim S."/>
            <person name="Guda C."/>
            <person name="Jansen R.K."/>
            <person name="Luo H."/>
            <person name="Tomkins J."/>
            <person name="Rognli O.A."/>
            <person name="Daniell H."/>
            <person name="Clarke J.L."/>
        </authorList>
    </citation>
    <scope>NUCLEOTIDE SEQUENCE [LARGE SCALE GENOMIC DNA]</scope>
    <source>
        <strain>cv. Penn A-4</strain>
    </source>
</reference>
<name>CCSA_AGRST</name>
<sequence length="319" mass="36230">MLFATLEHILTHISFSTISIVITIHLITLLVRELGGLRDSSEKGMIVTFFSITGFLVSRWASSGHFPLSNLYESLIFLSWALYILHTIPKIQNSKNDLSTITTPSTILTQGFATSGLLTEMHQSTILVPALQSQWLMMHVSMMLLSYATLLCGSLLSAAILIIRFRNNFHFFSKKKKNVLHKTFLFSDFYAKRSALKSTSVPSFPNYYKYQLTERLDSWSYRVISLGFTLLTIGILCGAVWANEAWGSYWNWDPKETWAFITWTIFAIYLHSRTNQNWKGTNSALVASIGFLIIWICYFGINLLGIGLHSYGSFTLTPK</sequence>
<accession>A1EA58</accession>
<feature type="chain" id="PRO_0000353729" description="Cytochrome c biogenesis protein CcsA">
    <location>
        <begin position="1"/>
        <end position="319"/>
    </location>
</feature>
<feature type="transmembrane region" description="Helical" evidence="1">
    <location>
        <begin position="9"/>
        <end position="29"/>
    </location>
</feature>
<feature type="transmembrane region" description="Helical" evidence="1">
    <location>
        <begin position="44"/>
        <end position="64"/>
    </location>
</feature>
<feature type="transmembrane region" description="Helical" evidence="1">
    <location>
        <begin position="68"/>
        <end position="88"/>
    </location>
</feature>
<feature type="transmembrane region" description="Helical" evidence="1">
    <location>
        <begin position="143"/>
        <end position="163"/>
    </location>
</feature>
<feature type="transmembrane region" description="Helical" evidence="1">
    <location>
        <begin position="223"/>
        <end position="243"/>
    </location>
</feature>
<feature type="transmembrane region" description="Helical" evidence="1">
    <location>
        <begin position="257"/>
        <end position="271"/>
    </location>
</feature>
<feature type="transmembrane region" description="Helical" evidence="1">
    <location>
        <begin position="286"/>
        <end position="306"/>
    </location>
</feature>
<evidence type="ECO:0000255" key="1">
    <source>
        <dbReference type="HAMAP-Rule" id="MF_01391"/>
    </source>
</evidence>
<comment type="function">
    <text evidence="1">Required during biogenesis of c-type cytochromes (cytochrome c6 and cytochrome f) at the step of heme attachment.</text>
</comment>
<comment type="subunit">
    <text evidence="1">May interact with Ccs1.</text>
</comment>
<comment type="subcellular location">
    <subcellularLocation>
        <location evidence="1">Plastid</location>
        <location evidence="1">Chloroplast thylakoid membrane</location>
        <topology evidence="1">Multi-pass membrane protein</topology>
    </subcellularLocation>
</comment>
<comment type="similarity">
    <text evidence="1">Belongs to the CcmF/CycK/Ccl1/NrfE/CcsA family.</text>
</comment>
<proteinExistence type="inferred from homology"/>
<geneLocation type="chloroplast"/>
<protein>
    <recommendedName>
        <fullName evidence="1">Cytochrome c biogenesis protein CcsA</fullName>
    </recommendedName>
</protein>
<keyword id="KW-0150">Chloroplast</keyword>
<keyword id="KW-0201">Cytochrome c-type biogenesis</keyword>
<keyword id="KW-0472">Membrane</keyword>
<keyword id="KW-0934">Plastid</keyword>
<keyword id="KW-0793">Thylakoid</keyword>
<keyword id="KW-0812">Transmembrane</keyword>
<keyword id="KW-1133">Transmembrane helix</keyword>
<gene>
    <name evidence="1" type="primary">ccsA</name>
</gene>
<organism>
    <name type="scientific">Agrostis stolonifera</name>
    <name type="common">Creeping bentgrass</name>
    <dbReference type="NCBI Taxonomy" id="63632"/>
    <lineage>
        <taxon>Eukaryota</taxon>
        <taxon>Viridiplantae</taxon>
        <taxon>Streptophyta</taxon>
        <taxon>Embryophyta</taxon>
        <taxon>Tracheophyta</taxon>
        <taxon>Spermatophyta</taxon>
        <taxon>Magnoliopsida</taxon>
        <taxon>Liliopsida</taxon>
        <taxon>Poales</taxon>
        <taxon>Poaceae</taxon>
        <taxon>BOP clade</taxon>
        <taxon>Pooideae</taxon>
        <taxon>Poodae</taxon>
        <taxon>Poeae</taxon>
        <taxon>Poeae Chloroplast Group 1 (Aveneae type)</taxon>
        <taxon>Agrostidodinae</taxon>
        <taxon>Agrostidinae</taxon>
        <taxon>Agrostis</taxon>
    </lineage>
</organism>
<dbReference type="EMBL" id="EF115543">
    <property type="protein sequence ID" value="ABK79630.1"/>
    <property type="molecule type" value="Genomic_DNA"/>
</dbReference>
<dbReference type="RefSeq" id="YP_874786.1">
    <property type="nucleotide sequence ID" value="NC_008591.1"/>
</dbReference>
<dbReference type="SMR" id="A1EA58"/>
<dbReference type="GeneID" id="4525035"/>
<dbReference type="GO" id="GO:0009535">
    <property type="term" value="C:chloroplast thylakoid membrane"/>
    <property type="evidence" value="ECO:0007669"/>
    <property type="project" value="UniProtKB-SubCell"/>
</dbReference>
<dbReference type="GO" id="GO:0005886">
    <property type="term" value="C:plasma membrane"/>
    <property type="evidence" value="ECO:0007669"/>
    <property type="project" value="TreeGrafter"/>
</dbReference>
<dbReference type="GO" id="GO:0020037">
    <property type="term" value="F:heme binding"/>
    <property type="evidence" value="ECO:0007669"/>
    <property type="project" value="InterPro"/>
</dbReference>
<dbReference type="GO" id="GO:0017004">
    <property type="term" value="P:cytochrome complex assembly"/>
    <property type="evidence" value="ECO:0007669"/>
    <property type="project" value="UniProtKB-UniRule"/>
</dbReference>
<dbReference type="HAMAP" id="MF_01391">
    <property type="entry name" value="CytC_CcsA"/>
    <property type="match status" value="1"/>
</dbReference>
<dbReference type="InterPro" id="IPR002541">
    <property type="entry name" value="Cyt_c_assembly"/>
</dbReference>
<dbReference type="InterPro" id="IPR017562">
    <property type="entry name" value="Cyt_c_biogenesis_CcsA"/>
</dbReference>
<dbReference type="InterPro" id="IPR045062">
    <property type="entry name" value="Cyt_c_biogenesis_CcsA/CcmC"/>
</dbReference>
<dbReference type="NCBIfam" id="TIGR03144">
    <property type="entry name" value="cytochr_II_ccsB"/>
    <property type="match status" value="1"/>
</dbReference>
<dbReference type="PANTHER" id="PTHR30071:SF1">
    <property type="entry name" value="CYTOCHROME B_B6 PROTEIN-RELATED"/>
    <property type="match status" value="1"/>
</dbReference>
<dbReference type="PANTHER" id="PTHR30071">
    <property type="entry name" value="HEME EXPORTER PROTEIN C"/>
    <property type="match status" value="1"/>
</dbReference>
<dbReference type="Pfam" id="PF01578">
    <property type="entry name" value="Cytochrom_C_asm"/>
    <property type="match status" value="1"/>
</dbReference>